<feature type="chain" id="PRO_0000329430" description="Mitochondrial substrate carrier family protein R">
    <location>
        <begin position="1"/>
        <end position="326"/>
    </location>
</feature>
<feature type="transmembrane region" description="Helical; Name=1" evidence="2">
    <location>
        <begin position="12"/>
        <end position="32"/>
    </location>
</feature>
<feature type="transmembrane region" description="Helical; Name=2" evidence="2">
    <location>
        <begin position="64"/>
        <end position="84"/>
    </location>
</feature>
<feature type="transmembrane region" description="Helical; Name=3" evidence="2">
    <location>
        <begin position="104"/>
        <end position="124"/>
    </location>
</feature>
<feature type="transmembrane region" description="Helical; Name=4" evidence="2">
    <location>
        <begin position="185"/>
        <end position="205"/>
    </location>
</feature>
<feature type="transmembrane region" description="Helical; Name=5" evidence="2">
    <location>
        <begin position="226"/>
        <end position="246"/>
    </location>
</feature>
<feature type="transmembrane region" description="Helical; Name=6" evidence="2">
    <location>
        <begin position="290"/>
        <end position="310"/>
    </location>
</feature>
<feature type="repeat" description="Solcar 1">
    <location>
        <begin position="9"/>
        <end position="95"/>
    </location>
</feature>
<feature type="repeat" description="Solcar 2">
    <location>
        <begin position="101"/>
        <end position="214"/>
    </location>
</feature>
<feature type="repeat" description="Solcar 3">
    <location>
        <begin position="226"/>
        <end position="318"/>
    </location>
</feature>
<dbReference type="EMBL" id="AAFI02000057">
    <property type="protein sequence ID" value="EAL65520.1"/>
    <property type="molecule type" value="Genomic_DNA"/>
</dbReference>
<dbReference type="RefSeq" id="XP_638883.1">
    <property type="nucleotide sequence ID" value="XM_633791.1"/>
</dbReference>
<dbReference type="SMR" id="Q54QI8"/>
<dbReference type="FunCoup" id="Q54QI8">
    <property type="interactions" value="113"/>
</dbReference>
<dbReference type="STRING" id="44689.Q54QI8"/>
<dbReference type="PaxDb" id="44689-DDB0234096"/>
<dbReference type="EnsemblProtists" id="EAL65520">
    <property type="protein sequence ID" value="EAL65520"/>
    <property type="gene ID" value="DDB_G0283811"/>
</dbReference>
<dbReference type="GeneID" id="8624281"/>
<dbReference type="KEGG" id="ddi:DDB_G0283811"/>
<dbReference type="dictyBase" id="DDB_G0283811">
    <property type="gene designation" value="mcfR"/>
</dbReference>
<dbReference type="VEuPathDB" id="AmoebaDB:DDB_G0283811"/>
<dbReference type="eggNOG" id="KOG0752">
    <property type="taxonomic scope" value="Eukaryota"/>
</dbReference>
<dbReference type="HOGENOM" id="CLU_015166_10_1_1"/>
<dbReference type="InParanoid" id="Q54QI8"/>
<dbReference type="OMA" id="KMAPMVA"/>
<dbReference type="PhylomeDB" id="Q54QI8"/>
<dbReference type="PRO" id="PR:Q54QI8"/>
<dbReference type="Proteomes" id="UP000002195">
    <property type="component" value="Chromosome 4"/>
</dbReference>
<dbReference type="GO" id="GO:0005743">
    <property type="term" value="C:mitochondrial inner membrane"/>
    <property type="evidence" value="ECO:0000318"/>
    <property type="project" value="GO_Central"/>
</dbReference>
<dbReference type="GO" id="GO:0015228">
    <property type="term" value="F:coenzyme A transmembrane transporter activity"/>
    <property type="evidence" value="ECO:0000250"/>
    <property type="project" value="dictyBase"/>
</dbReference>
<dbReference type="GO" id="GO:0015880">
    <property type="term" value="P:coenzyme A transport"/>
    <property type="evidence" value="ECO:0000250"/>
    <property type="project" value="dictyBase"/>
</dbReference>
<dbReference type="GO" id="GO:1990559">
    <property type="term" value="P:mitochondrial coenzyme A transmembrane transport"/>
    <property type="evidence" value="ECO:0000318"/>
    <property type="project" value="GO_Central"/>
</dbReference>
<dbReference type="FunFam" id="1.50.40.10:FF:000151">
    <property type="entry name" value="LEU5p Mitochondrial carrier protein"/>
    <property type="match status" value="1"/>
</dbReference>
<dbReference type="Gene3D" id="1.50.40.10">
    <property type="entry name" value="Mitochondrial carrier domain"/>
    <property type="match status" value="1"/>
</dbReference>
<dbReference type="InterPro" id="IPR002067">
    <property type="entry name" value="Mit_carrier"/>
</dbReference>
<dbReference type="InterPro" id="IPR018108">
    <property type="entry name" value="Mitochondrial_sb/sol_carrier"/>
</dbReference>
<dbReference type="InterPro" id="IPR023395">
    <property type="entry name" value="Mt_carrier_dom_sf"/>
</dbReference>
<dbReference type="PANTHER" id="PTHR24089">
    <property type="entry name" value="SOLUTE CARRIER FAMILY 25"/>
    <property type="match status" value="1"/>
</dbReference>
<dbReference type="Pfam" id="PF00153">
    <property type="entry name" value="Mito_carr"/>
    <property type="match status" value="3"/>
</dbReference>
<dbReference type="PRINTS" id="PR00926">
    <property type="entry name" value="MITOCARRIER"/>
</dbReference>
<dbReference type="SUPFAM" id="SSF103506">
    <property type="entry name" value="Mitochondrial carrier"/>
    <property type="match status" value="1"/>
</dbReference>
<dbReference type="PROSITE" id="PS50920">
    <property type="entry name" value="SOLCAR"/>
    <property type="match status" value="3"/>
</dbReference>
<comment type="function">
    <text evidence="1">Mitochondrial solute carriers shuttle metabolites, nucleotides, and cofactors through the mitochondrial inner membrane. May be involved in the accumulation of coenzyme A in the mitochondrial matrix (By similarity).</text>
</comment>
<comment type="subcellular location">
    <subcellularLocation>
        <location evidence="1">Mitochondrion inner membrane</location>
        <topology evidence="1">Multi-pass membrane protein</topology>
    </subcellularLocation>
</comment>
<comment type="similarity">
    <text evidence="3">Belongs to the mitochondrial carrier (TC 2.A.29) family.</text>
</comment>
<proteinExistence type="inferred from homology"/>
<gene>
    <name type="primary">mcfR</name>
    <name type="synonym">slc25a16B</name>
    <name type="ORF">DDB_G0283811</name>
</gene>
<name>MCFR_DICDI</name>
<organism>
    <name type="scientific">Dictyostelium discoideum</name>
    <name type="common">Social amoeba</name>
    <dbReference type="NCBI Taxonomy" id="44689"/>
    <lineage>
        <taxon>Eukaryota</taxon>
        <taxon>Amoebozoa</taxon>
        <taxon>Evosea</taxon>
        <taxon>Eumycetozoa</taxon>
        <taxon>Dictyostelia</taxon>
        <taxon>Dictyosteliales</taxon>
        <taxon>Dictyosteliaceae</taxon>
        <taxon>Dictyostelium</taxon>
    </lineage>
</organism>
<accession>Q54QI8</accession>
<reference key="1">
    <citation type="journal article" date="2005" name="Nature">
        <title>The genome of the social amoeba Dictyostelium discoideum.</title>
        <authorList>
            <person name="Eichinger L."/>
            <person name="Pachebat J.A."/>
            <person name="Gloeckner G."/>
            <person name="Rajandream M.A."/>
            <person name="Sucgang R."/>
            <person name="Berriman M."/>
            <person name="Song J."/>
            <person name="Olsen R."/>
            <person name="Szafranski K."/>
            <person name="Xu Q."/>
            <person name="Tunggal B."/>
            <person name="Kummerfeld S."/>
            <person name="Madera M."/>
            <person name="Konfortov B.A."/>
            <person name="Rivero F."/>
            <person name="Bankier A.T."/>
            <person name="Lehmann R."/>
            <person name="Hamlin N."/>
            <person name="Davies R."/>
            <person name="Gaudet P."/>
            <person name="Fey P."/>
            <person name="Pilcher K."/>
            <person name="Chen G."/>
            <person name="Saunders D."/>
            <person name="Sodergren E.J."/>
            <person name="Davis P."/>
            <person name="Kerhornou A."/>
            <person name="Nie X."/>
            <person name="Hall N."/>
            <person name="Anjard C."/>
            <person name="Hemphill L."/>
            <person name="Bason N."/>
            <person name="Farbrother P."/>
            <person name="Desany B."/>
            <person name="Just E."/>
            <person name="Morio T."/>
            <person name="Rost R."/>
            <person name="Churcher C.M."/>
            <person name="Cooper J."/>
            <person name="Haydock S."/>
            <person name="van Driessche N."/>
            <person name="Cronin A."/>
            <person name="Goodhead I."/>
            <person name="Muzny D.M."/>
            <person name="Mourier T."/>
            <person name="Pain A."/>
            <person name="Lu M."/>
            <person name="Harper D."/>
            <person name="Lindsay R."/>
            <person name="Hauser H."/>
            <person name="James K.D."/>
            <person name="Quiles M."/>
            <person name="Madan Babu M."/>
            <person name="Saito T."/>
            <person name="Buchrieser C."/>
            <person name="Wardroper A."/>
            <person name="Felder M."/>
            <person name="Thangavelu M."/>
            <person name="Johnson D."/>
            <person name="Knights A."/>
            <person name="Loulseged H."/>
            <person name="Mungall K.L."/>
            <person name="Oliver K."/>
            <person name="Price C."/>
            <person name="Quail M.A."/>
            <person name="Urushihara H."/>
            <person name="Hernandez J."/>
            <person name="Rabbinowitsch E."/>
            <person name="Steffen D."/>
            <person name="Sanders M."/>
            <person name="Ma J."/>
            <person name="Kohara Y."/>
            <person name="Sharp S."/>
            <person name="Simmonds M.N."/>
            <person name="Spiegler S."/>
            <person name="Tivey A."/>
            <person name="Sugano S."/>
            <person name="White B."/>
            <person name="Walker D."/>
            <person name="Woodward J.R."/>
            <person name="Winckler T."/>
            <person name="Tanaka Y."/>
            <person name="Shaulsky G."/>
            <person name="Schleicher M."/>
            <person name="Weinstock G.M."/>
            <person name="Rosenthal A."/>
            <person name="Cox E.C."/>
            <person name="Chisholm R.L."/>
            <person name="Gibbs R.A."/>
            <person name="Loomis W.F."/>
            <person name="Platzer M."/>
            <person name="Kay R.R."/>
            <person name="Williams J.G."/>
            <person name="Dear P.H."/>
            <person name="Noegel A.A."/>
            <person name="Barrell B.G."/>
            <person name="Kuspa A."/>
        </authorList>
    </citation>
    <scope>NUCLEOTIDE SEQUENCE [LARGE SCALE GENOMIC DNA]</scope>
    <source>
        <strain>AX4</strain>
    </source>
</reference>
<reference key="2">
    <citation type="journal article" date="2007" name="Biochimie">
        <title>Mitochondrial carrier family: repertoire and peculiarities of the cellular slime mould Dictyostelium discoideum.</title>
        <authorList>
            <person name="Satre M."/>
            <person name="Mattei S."/>
            <person name="Aubry L."/>
            <person name="Gaudet P."/>
            <person name="Pelosi L."/>
            <person name="Brandolin G."/>
            <person name="Klein G."/>
        </authorList>
    </citation>
    <scope>REVIEW</scope>
</reference>
<protein>
    <recommendedName>
        <fullName>Mitochondrial substrate carrier family protein R</fullName>
    </recommendedName>
    <alternativeName>
        <fullName>Solute carrier family 25 member 16 homolog B</fullName>
    </alternativeName>
</protein>
<keyword id="KW-0472">Membrane</keyword>
<keyword id="KW-0496">Mitochondrion</keyword>
<keyword id="KW-0999">Mitochondrion inner membrane</keyword>
<keyword id="KW-1185">Reference proteome</keyword>
<keyword id="KW-0677">Repeat</keyword>
<keyword id="KW-0812">Transmembrane</keyword>
<keyword id="KW-1133">Transmembrane helix</keyword>
<keyword id="KW-0813">Transport</keyword>
<evidence type="ECO:0000250" key="1"/>
<evidence type="ECO:0000255" key="2"/>
<evidence type="ECO:0000305" key="3"/>
<sequence length="326" mass="35861">MTVHGNTKTSPMVTLLAGGVSGVIAKSTIAPLERVKILYQVKSKMYSFNSVYGLMKNIIKNEGLAGLWKGNTATILRIFPYSAIQWTSYDYLKNNFVTDKKSSVQIFIAGSLGFSCAILLTYPLDVIRARLALSYSNNNNNNSINSKNLNSSTQPPKVLKNGIGAVNIEKSIDFNGYKTKGLFKGIWRGILPTLYGSIPYAGVGYSSFEYFKRIAPDSFRNEKGDVIGIYKLISGGVAGGLGQTAAYPLDVVRRRIQTTGYGDGKGVENLKHSTLKTMFTIFQKEGIYALFKGISINYIKVIPTNGVAFLTYETLCDYFNSKLNKN</sequence>